<name>WTR42_ARATH</name>
<reference key="1">
    <citation type="journal article" date="1998" name="DNA Res.">
        <title>Structural analysis of Arabidopsis thaliana chromosome 5. V. Sequence features of the regions of 1,381,565 bp covered by twenty one physically assigned P1 and TAC clones.</title>
        <authorList>
            <person name="Kaneko T."/>
            <person name="Kotani H."/>
            <person name="Nakamura Y."/>
            <person name="Sato S."/>
            <person name="Asamizu E."/>
            <person name="Miyajima N."/>
            <person name="Tabata S."/>
        </authorList>
    </citation>
    <scope>NUCLEOTIDE SEQUENCE [LARGE SCALE GENOMIC DNA]</scope>
    <source>
        <strain>cv. Columbia</strain>
    </source>
</reference>
<reference key="2">
    <citation type="journal article" date="2017" name="Plant J.">
        <title>Araport11: a complete reannotation of the Arabidopsis thaliana reference genome.</title>
        <authorList>
            <person name="Cheng C.Y."/>
            <person name="Krishnakumar V."/>
            <person name="Chan A.P."/>
            <person name="Thibaud-Nissen F."/>
            <person name="Schobel S."/>
            <person name="Town C.D."/>
        </authorList>
    </citation>
    <scope>GENOME REANNOTATION</scope>
    <source>
        <strain>cv. Columbia</strain>
    </source>
</reference>
<reference key="3">
    <citation type="journal article" date="2003" name="Science">
        <title>Empirical analysis of transcriptional activity in the Arabidopsis genome.</title>
        <authorList>
            <person name="Yamada K."/>
            <person name="Lim J."/>
            <person name="Dale J.M."/>
            <person name="Chen H."/>
            <person name="Shinn P."/>
            <person name="Palm C.J."/>
            <person name="Southwick A.M."/>
            <person name="Wu H.C."/>
            <person name="Kim C.J."/>
            <person name="Nguyen M."/>
            <person name="Pham P.K."/>
            <person name="Cheuk R.F."/>
            <person name="Karlin-Newmann G."/>
            <person name="Liu S.X."/>
            <person name="Lam B."/>
            <person name="Sakano H."/>
            <person name="Wu T."/>
            <person name="Yu G."/>
            <person name="Miranda M."/>
            <person name="Quach H.L."/>
            <person name="Tripp M."/>
            <person name="Chang C.H."/>
            <person name="Lee J.M."/>
            <person name="Toriumi M.J."/>
            <person name="Chan M.M."/>
            <person name="Tang C.C."/>
            <person name="Onodera C.S."/>
            <person name="Deng J.M."/>
            <person name="Akiyama K."/>
            <person name="Ansari Y."/>
            <person name="Arakawa T."/>
            <person name="Banh J."/>
            <person name="Banno F."/>
            <person name="Bowser L."/>
            <person name="Brooks S.Y."/>
            <person name="Carninci P."/>
            <person name="Chao Q."/>
            <person name="Choy N."/>
            <person name="Enju A."/>
            <person name="Goldsmith A.D."/>
            <person name="Gurjal M."/>
            <person name="Hansen N.F."/>
            <person name="Hayashizaki Y."/>
            <person name="Johnson-Hopson C."/>
            <person name="Hsuan V.W."/>
            <person name="Iida K."/>
            <person name="Karnes M."/>
            <person name="Khan S."/>
            <person name="Koesema E."/>
            <person name="Ishida J."/>
            <person name="Jiang P.X."/>
            <person name="Jones T."/>
            <person name="Kawai J."/>
            <person name="Kamiya A."/>
            <person name="Meyers C."/>
            <person name="Nakajima M."/>
            <person name="Narusaka M."/>
            <person name="Seki M."/>
            <person name="Sakurai T."/>
            <person name="Satou M."/>
            <person name="Tamse R."/>
            <person name="Vaysberg M."/>
            <person name="Wallender E.K."/>
            <person name="Wong C."/>
            <person name="Yamamura Y."/>
            <person name="Yuan S."/>
            <person name="Shinozaki K."/>
            <person name="Davis R.W."/>
            <person name="Theologis A."/>
            <person name="Ecker J.R."/>
        </authorList>
    </citation>
    <scope>NUCLEOTIDE SEQUENCE [LARGE SCALE MRNA]</scope>
    <source>
        <strain>cv. Columbia</strain>
    </source>
</reference>
<reference key="4">
    <citation type="submission" date="2006-07" db="EMBL/GenBank/DDBJ databases">
        <title>Large-scale analysis of RIKEN Arabidopsis full-length (RAFL) cDNAs.</title>
        <authorList>
            <person name="Totoki Y."/>
            <person name="Seki M."/>
            <person name="Ishida J."/>
            <person name="Nakajima M."/>
            <person name="Enju A."/>
            <person name="Kamiya A."/>
            <person name="Narusaka M."/>
            <person name="Shin-i T."/>
            <person name="Nakagawa M."/>
            <person name="Sakamoto N."/>
            <person name="Oishi K."/>
            <person name="Kohara Y."/>
            <person name="Kobayashi M."/>
            <person name="Toyoda A."/>
            <person name="Sakaki Y."/>
            <person name="Sakurai T."/>
            <person name="Iida K."/>
            <person name="Akiyama K."/>
            <person name="Satou M."/>
            <person name="Toyoda T."/>
            <person name="Konagaya A."/>
            <person name="Carninci P."/>
            <person name="Kawai J."/>
            <person name="Hayashizaki Y."/>
            <person name="Shinozaki K."/>
        </authorList>
    </citation>
    <scope>NUCLEOTIDE SEQUENCE [LARGE SCALE MRNA]</scope>
    <source>
        <strain>cv. Columbia</strain>
    </source>
</reference>
<organism>
    <name type="scientific">Arabidopsis thaliana</name>
    <name type="common">Mouse-ear cress</name>
    <dbReference type="NCBI Taxonomy" id="3702"/>
    <lineage>
        <taxon>Eukaryota</taxon>
        <taxon>Viridiplantae</taxon>
        <taxon>Streptophyta</taxon>
        <taxon>Embryophyta</taxon>
        <taxon>Tracheophyta</taxon>
        <taxon>Spermatophyta</taxon>
        <taxon>Magnoliopsida</taxon>
        <taxon>eudicotyledons</taxon>
        <taxon>Gunneridae</taxon>
        <taxon>Pentapetalae</taxon>
        <taxon>rosids</taxon>
        <taxon>malvids</taxon>
        <taxon>Brassicales</taxon>
        <taxon>Brassicaceae</taxon>
        <taxon>Camelineae</taxon>
        <taxon>Arabidopsis</taxon>
    </lineage>
</organism>
<dbReference type="EMBL" id="AB010699">
    <property type="protein sequence ID" value="BAB10905.1"/>
    <property type="molecule type" value="Genomic_DNA"/>
</dbReference>
<dbReference type="EMBL" id="CP002688">
    <property type="protein sequence ID" value="AED94523.1"/>
    <property type="molecule type" value="Genomic_DNA"/>
</dbReference>
<dbReference type="EMBL" id="CP002688">
    <property type="protein sequence ID" value="ANM69648.1"/>
    <property type="molecule type" value="Genomic_DNA"/>
</dbReference>
<dbReference type="EMBL" id="BT008312">
    <property type="protein sequence ID" value="AAP37671.1"/>
    <property type="molecule type" value="mRNA"/>
</dbReference>
<dbReference type="EMBL" id="AK227665">
    <property type="protein sequence ID" value="BAE99652.1"/>
    <property type="molecule type" value="mRNA"/>
</dbReference>
<dbReference type="RefSeq" id="NP_001318710.1">
    <molecule id="Q9FL08-1"/>
    <property type="nucleotide sequence ID" value="NM_001344317.1"/>
</dbReference>
<dbReference type="RefSeq" id="NP_198840.2">
    <molecule id="Q9FL08-1"/>
    <property type="nucleotide sequence ID" value="NM_123388.5"/>
</dbReference>
<dbReference type="SMR" id="Q9FL08"/>
<dbReference type="FunCoup" id="Q9FL08">
    <property type="interactions" value="1"/>
</dbReference>
<dbReference type="STRING" id="3702.Q9FL08"/>
<dbReference type="iPTMnet" id="Q9FL08"/>
<dbReference type="PaxDb" id="3702-AT5G40240.2"/>
<dbReference type="EnsemblPlants" id="AT5G40240.1">
    <molecule id="Q9FL08-1"/>
    <property type="protein sequence ID" value="AT5G40240.1"/>
    <property type="gene ID" value="AT5G40240"/>
</dbReference>
<dbReference type="EnsemblPlants" id="AT5G40240.3">
    <molecule id="Q9FL08-1"/>
    <property type="protein sequence ID" value="AT5G40240.3"/>
    <property type="gene ID" value="AT5G40240"/>
</dbReference>
<dbReference type="GeneID" id="834022"/>
<dbReference type="Gramene" id="AT5G40240.1">
    <molecule id="Q9FL08-1"/>
    <property type="protein sequence ID" value="AT5G40240.1"/>
    <property type="gene ID" value="AT5G40240"/>
</dbReference>
<dbReference type="Gramene" id="AT5G40240.3">
    <molecule id="Q9FL08-1"/>
    <property type="protein sequence ID" value="AT5G40240.3"/>
    <property type="gene ID" value="AT5G40240"/>
</dbReference>
<dbReference type="KEGG" id="ath:AT5G40240"/>
<dbReference type="Araport" id="AT5G40240"/>
<dbReference type="TAIR" id="AT5G40240">
    <property type="gene designation" value="UMAMIT40"/>
</dbReference>
<dbReference type="eggNOG" id="ENOG502RNNC">
    <property type="taxonomic scope" value="Eukaryota"/>
</dbReference>
<dbReference type="HOGENOM" id="CLU_025359_0_1_1"/>
<dbReference type="InParanoid" id="Q9FL08"/>
<dbReference type="OMA" id="TESNWIL"/>
<dbReference type="PhylomeDB" id="Q9FL08"/>
<dbReference type="PRO" id="PR:Q9FL08"/>
<dbReference type="Proteomes" id="UP000006548">
    <property type="component" value="Chromosome 5"/>
</dbReference>
<dbReference type="ExpressionAtlas" id="Q9FL08">
    <property type="expression patterns" value="baseline and differential"/>
</dbReference>
<dbReference type="GO" id="GO:0016020">
    <property type="term" value="C:membrane"/>
    <property type="evidence" value="ECO:0007669"/>
    <property type="project" value="UniProtKB-SubCell"/>
</dbReference>
<dbReference type="GO" id="GO:0022857">
    <property type="term" value="F:transmembrane transporter activity"/>
    <property type="evidence" value="ECO:0007669"/>
    <property type="project" value="InterPro"/>
</dbReference>
<dbReference type="InterPro" id="IPR000620">
    <property type="entry name" value="EamA_dom"/>
</dbReference>
<dbReference type="InterPro" id="IPR030184">
    <property type="entry name" value="WAT1-related"/>
</dbReference>
<dbReference type="PANTHER" id="PTHR31218">
    <property type="entry name" value="WAT1-RELATED PROTEIN"/>
    <property type="match status" value="1"/>
</dbReference>
<dbReference type="Pfam" id="PF00892">
    <property type="entry name" value="EamA"/>
    <property type="match status" value="2"/>
</dbReference>
<dbReference type="SUPFAM" id="SSF103481">
    <property type="entry name" value="Multidrug resistance efflux transporter EmrE"/>
    <property type="match status" value="2"/>
</dbReference>
<proteinExistence type="evidence at transcript level"/>
<keyword id="KW-0025">Alternative splicing</keyword>
<keyword id="KW-0472">Membrane</keyword>
<keyword id="KW-1185">Reference proteome</keyword>
<keyword id="KW-0677">Repeat</keyword>
<keyword id="KW-0812">Transmembrane</keyword>
<keyword id="KW-1133">Transmembrane helix</keyword>
<protein>
    <recommendedName>
        <fullName>WAT1-related protein At5g40240</fullName>
    </recommendedName>
</protein>
<evidence type="ECO:0000250" key="1"/>
<evidence type="ECO:0000255" key="2"/>
<evidence type="ECO:0000305" key="3"/>
<sequence length="368" mass="40094">MREAGEEKVAWKYFTRDVVPFAAMFAVECATVGSNTLFKAATLRGLSFYVFVFYSYIVSTLLLLPLSVIFGRSRRLPAAKSPLFFKIFLLGLVGFMSQIAGCKGIAYSSPTLASAISNLTPAFTFTLAVIFRMEQVRLRSSATQAKIIGAILSISGALVVVLYKGPQVLASASFTTVLPTVTLHQQLTSIESSWIIGGLLLASQYFLISVWYILQTRVMEVYPEEITVVFFYNLFATLISVPVCLFAESNLTSWVLKPDISLAAIIYSGVFVSLFSALTHTWGLHLKGPVYISLFRPLSIAIAVAMGAIFLGDALHLGSVIGSMILCIGFYTVIWGKAREDTIKTVAGSEQSPLLLTHIIEDGAFPLS</sequence>
<feature type="chain" id="PRO_0000421349" description="WAT1-related protein At5g40240">
    <location>
        <begin position="1"/>
        <end position="368"/>
    </location>
</feature>
<feature type="transmembrane region" description="Helical" evidence="2">
    <location>
        <begin position="18"/>
        <end position="38"/>
    </location>
</feature>
<feature type="transmembrane region" description="Helical" evidence="2">
    <location>
        <begin position="50"/>
        <end position="70"/>
    </location>
</feature>
<feature type="transmembrane region" description="Helical" evidence="2">
    <location>
        <begin position="82"/>
        <end position="102"/>
    </location>
</feature>
<feature type="transmembrane region" description="Helical" evidence="2">
    <location>
        <begin position="111"/>
        <end position="131"/>
    </location>
</feature>
<feature type="transmembrane region" description="Helical" evidence="2">
    <location>
        <begin position="142"/>
        <end position="162"/>
    </location>
</feature>
<feature type="transmembrane region" description="Helical" evidence="2">
    <location>
        <begin position="194"/>
        <end position="214"/>
    </location>
</feature>
<feature type="transmembrane region" description="Helical" evidence="2">
    <location>
        <begin position="226"/>
        <end position="246"/>
    </location>
</feature>
<feature type="transmembrane region" description="Helical" evidence="2">
    <location>
        <begin position="260"/>
        <end position="280"/>
    </location>
</feature>
<feature type="transmembrane region" description="Helical" evidence="2">
    <location>
        <begin position="292"/>
        <end position="312"/>
    </location>
</feature>
<feature type="transmembrane region" description="Helical" evidence="2">
    <location>
        <begin position="315"/>
        <end position="335"/>
    </location>
</feature>
<feature type="domain" description="EamA 1">
    <location>
        <begin position="33"/>
        <end position="161"/>
    </location>
</feature>
<feature type="domain" description="EamA 2">
    <location>
        <begin position="208"/>
        <end position="334"/>
    </location>
</feature>
<accession>Q9FL08</accession>
<gene>
    <name type="ordered locus">At5g40240</name>
    <name type="ORF">MSN9.140</name>
</gene>
<comment type="subcellular location">
    <subcellularLocation>
        <location evidence="1">Membrane</location>
        <topology evidence="3">Multi-pass membrane protein</topology>
    </subcellularLocation>
</comment>
<comment type="alternative products">
    <event type="alternative splicing"/>
    <isoform>
        <id>Q9FL08-1</id>
        <name>1</name>
        <sequence type="displayed"/>
    </isoform>
    <text>Additional isoforms seem to exist.</text>
</comment>
<comment type="similarity">
    <text evidence="3">Belongs to the drug/metabolite transporter (DMT) superfamily. Plant drug/metabolite exporter (P-DME) (TC 2.A.7.4) family.</text>
</comment>